<protein>
    <recommendedName>
        <fullName evidence="1">2,3-bisphosphoglycerate-independent phosphoglycerate mutase</fullName>
        <shortName evidence="1">BPG-independent PGAM</shortName>
        <shortName evidence="1">Phosphoglyceromutase</shortName>
        <shortName evidence="1">iPGM</shortName>
        <ecNumber evidence="1">5.4.2.12</ecNumber>
    </recommendedName>
</protein>
<sequence length="514" mass="56110">MSVSKKPMVLVILDGYGYREEQQDNAIFSAKTPVMDALWANRPHTLIDASGLEVGLPDRQMGNSEVGHVNLGAGRIVYQDLTRLDVEIKDRAFFANPVLTGAVDKAKNAGKAVHIMGLLSAGGVHSHEDHIMAMVELAAERGAEKIYLHAFLDGRDTPPRSAESSLKKFEEKFAALGKGRVASIIGRYYAMDRDNRWDRVEKAYDLLTLAQGEFQADTAVAGLQAAYARDENDEFVKATVIRAEGQPDAAMEDGDALIFMNFRADRAREITRAFVNADFDGFARKKVVNVDFVMLTEYAADIKTAVAYPPASLVNTFGEWMAKNDKTQLRISETEKYAHVTFFFNGGVEESFKGEDRILINSPKVATYDLQPEMSSAELTEKLVAAIKSGKYDTIICNYPNGDMVGHTGVMEAAVKAVEALDHCVEEVAKAVESVGGQLLITADHGNAEQMRDPATGQAHTAHTNLPVPLIYVGDKNVKAVAGGKLSDIAPTMLSLMGMEIPQEMTGKPLFIVE</sequence>
<keyword id="KW-0324">Glycolysis</keyword>
<keyword id="KW-0413">Isomerase</keyword>
<keyword id="KW-0464">Manganese</keyword>
<keyword id="KW-0479">Metal-binding</keyword>
<reference key="1">
    <citation type="submission" date="2008-02" db="EMBL/GenBank/DDBJ databases">
        <title>Complete sequence of Escherichia coli C str. ATCC 8739.</title>
        <authorList>
            <person name="Copeland A."/>
            <person name="Lucas S."/>
            <person name="Lapidus A."/>
            <person name="Glavina del Rio T."/>
            <person name="Dalin E."/>
            <person name="Tice H."/>
            <person name="Bruce D."/>
            <person name="Goodwin L."/>
            <person name="Pitluck S."/>
            <person name="Kiss H."/>
            <person name="Brettin T."/>
            <person name="Detter J.C."/>
            <person name="Han C."/>
            <person name="Kuske C.R."/>
            <person name="Schmutz J."/>
            <person name="Larimer F."/>
            <person name="Land M."/>
            <person name="Hauser L."/>
            <person name="Kyrpides N."/>
            <person name="Mikhailova N."/>
            <person name="Ingram L."/>
            <person name="Richardson P."/>
        </authorList>
    </citation>
    <scope>NUCLEOTIDE SEQUENCE [LARGE SCALE GENOMIC DNA]</scope>
    <source>
        <strain>ATCC 8739 / DSM 1576 / NBRC 3972 / NCIMB 8545 / WDCM 00012 / Crooks</strain>
    </source>
</reference>
<name>GPMI_ECOLC</name>
<evidence type="ECO:0000255" key="1">
    <source>
        <dbReference type="HAMAP-Rule" id="MF_01038"/>
    </source>
</evidence>
<dbReference type="EC" id="5.4.2.12" evidence="1"/>
<dbReference type="EMBL" id="CP000946">
    <property type="protein sequence ID" value="ACA75782.1"/>
    <property type="molecule type" value="Genomic_DNA"/>
</dbReference>
<dbReference type="SMR" id="B1IZH8"/>
<dbReference type="KEGG" id="ecl:EcolC_0096"/>
<dbReference type="HOGENOM" id="CLU_026099_2_0_6"/>
<dbReference type="UniPathway" id="UPA00109">
    <property type="reaction ID" value="UER00186"/>
</dbReference>
<dbReference type="GO" id="GO:0005829">
    <property type="term" value="C:cytosol"/>
    <property type="evidence" value="ECO:0007669"/>
    <property type="project" value="TreeGrafter"/>
</dbReference>
<dbReference type="GO" id="GO:0030145">
    <property type="term" value="F:manganese ion binding"/>
    <property type="evidence" value="ECO:0007669"/>
    <property type="project" value="UniProtKB-UniRule"/>
</dbReference>
<dbReference type="GO" id="GO:0004619">
    <property type="term" value="F:phosphoglycerate mutase activity"/>
    <property type="evidence" value="ECO:0007669"/>
    <property type="project" value="UniProtKB-EC"/>
</dbReference>
<dbReference type="GO" id="GO:0006007">
    <property type="term" value="P:glucose catabolic process"/>
    <property type="evidence" value="ECO:0007669"/>
    <property type="project" value="InterPro"/>
</dbReference>
<dbReference type="GO" id="GO:0006096">
    <property type="term" value="P:glycolytic process"/>
    <property type="evidence" value="ECO:0007669"/>
    <property type="project" value="UniProtKB-UniRule"/>
</dbReference>
<dbReference type="CDD" id="cd16010">
    <property type="entry name" value="iPGM"/>
    <property type="match status" value="1"/>
</dbReference>
<dbReference type="FunFam" id="3.40.1450.10:FF:000001">
    <property type="entry name" value="2,3-bisphosphoglycerate-independent phosphoglycerate mutase"/>
    <property type="match status" value="1"/>
</dbReference>
<dbReference type="FunFam" id="3.40.720.10:FF:000001">
    <property type="entry name" value="2,3-bisphosphoglycerate-independent phosphoglycerate mutase"/>
    <property type="match status" value="1"/>
</dbReference>
<dbReference type="Gene3D" id="3.40.720.10">
    <property type="entry name" value="Alkaline Phosphatase, subunit A"/>
    <property type="match status" value="1"/>
</dbReference>
<dbReference type="Gene3D" id="3.40.1450.10">
    <property type="entry name" value="BPG-independent phosphoglycerate mutase, domain B"/>
    <property type="match status" value="1"/>
</dbReference>
<dbReference type="HAMAP" id="MF_01038">
    <property type="entry name" value="GpmI"/>
    <property type="match status" value="1"/>
</dbReference>
<dbReference type="InterPro" id="IPR017850">
    <property type="entry name" value="Alkaline_phosphatase_core_sf"/>
</dbReference>
<dbReference type="InterPro" id="IPR011258">
    <property type="entry name" value="BPG-indep_PGM_N"/>
</dbReference>
<dbReference type="InterPro" id="IPR006124">
    <property type="entry name" value="Metalloenzyme"/>
</dbReference>
<dbReference type="InterPro" id="IPR036646">
    <property type="entry name" value="PGAM_B_sf"/>
</dbReference>
<dbReference type="InterPro" id="IPR005995">
    <property type="entry name" value="Pgm_bpd_ind"/>
</dbReference>
<dbReference type="NCBIfam" id="TIGR01307">
    <property type="entry name" value="pgm_bpd_ind"/>
    <property type="match status" value="1"/>
</dbReference>
<dbReference type="NCBIfam" id="NF003897">
    <property type="entry name" value="PRK05434.1-5"/>
    <property type="match status" value="1"/>
</dbReference>
<dbReference type="PANTHER" id="PTHR31637">
    <property type="entry name" value="2,3-BISPHOSPHOGLYCERATE-INDEPENDENT PHOSPHOGLYCERATE MUTASE"/>
    <property type="match status" value="1"/>
</dbReference>
<dbReference type="PANTHER" id="PTHR31637:SF0">
    <property type="entry name" value="2,3-BISPHOSPHOGLYCERATE-INDEPENDENT PHOSPHOGLYCERATE MUTASE"/>
    <property type="match status" value="1"/>
</dbReference>
<dbReference type="Pfam" id="PF06415">
    <property type="entry name" value="iPGM_N"/>
    <property type="match status" value="1"/>
</dbReference>
<dbReference type="Pfam" id="PF01676">
    <property type="entry name" value="Metalloenzyme"/>
    <property type="match status" value="1"/>
</dbReference>
<dbReference type="PIRSF" id="PIRSF001492">
    <property type="entry name" value="IPGAM"/>
    <property type="match status" value="1"/>
</dbReference>
<dbReference type="SUPFAM" id="SSF64158">
    <property type="entry name" value="2,3-Bisphosphoglycerate-independent phosphoglycerate mutase, substrate-binding domain"/>
    <property type="match status" value="1"/>
</dbReference>
<dbReference type="SUPFAM" id="SSF53649">
    <property type="entry name" value="Alkaline phosphatase-like"/>
    <property type="match status" value="1"/>
</dbReference>
<gene>
    <name evidence="1" type="primary">gpmI</name>
    <name type="ordered locus">EcolC_0096</name>
</gene>
<feature type="chain" id="PRO_1000084304" description="2,3-bisphosphoglycerate-independent phosphoglycerate mutase">
    <location>
        <begin position="1"/>
        <end position="514"/>
    </location>
</feature>
<feature type="active site" description="Phosphoserine intermediate" evidence="1">
    <location>
        <position position="64"/>
    </location>
</feature>
<feature type="binding site" evidence="1">
    <location>
        <position position="14"/>
    </location>
    <ligand>
        <name>Mn(2+)</name>
        <dbReference type="ChEBI" id="CHEBI:29035"/>
        <label>2</label>
    </ligand>
</feature>
<feature type="binding site" evidence="1">
    <location>
        <position position="64"/>
    </location>
    <ligand>
        <name>Mn(2+)</name>
        <dbReference type="ChEBI" id="CHEBI:29035"/>
        <label>2</label>
    </ligand>
</feature>
<feature type="binding site" evidence="1">
    <location>
        <position position="125"/>
    </location>
    <ligand>
        <name>substrate</name>
    </ligand>
</feature>
<feature type="binding site" evidence="1">
    <location>
        <begin position="155"/>
        <end position="156"/>
    </location>
    <ligand>
        <name>substrate</name>
    </ligand>
</feature>
<feature type="binding site" evidence="1">
    <location>
        <position position="187"/>
    </location>
    <ligand>
        <name>substrate</name>
    </ligand>
</feature>
<feature type="binding site" evidence="1">
    <location>
        <position position="193"/>
    </location>
    <ligand>
        <name>substrate</name>
    </ligand>
</feature>
<feature type="binding site" evidence="1">
    <location>
        <begin position="263"/>
        <end position="266"/>
    </location>
    <ligand>
        <name>substrate</name>
    </ligand>
</feature>
<feature type="binding site" evidence="1">
    <location>
        <position position="336"/>
    </location>
    <ligand>
        <name>substrate</name>
    </ligand>
</feature>
<feature type="binding site" evidence="1">
    <location>
        <position position="403"/>
    </location>
    <ligand>
        <name>Mn(2+)</name>
        <dbReference type="ChEBI" id="CHEBI:29035"/>
        <label>1</label>
    </ligand>
</feature>
<feature type="binding site" evidence="1">
    <location>
        <position position="407"/>
    </location>
    <ligand>
        <name>Mn(2+)</name>
        <dbReference type="ChEBI" id="CHEBI:29035"/>
        <label>1</label>
    </ligand>
</feature>
<feature type="binding site" evidence="1">
    <location>
        <position position="444"/>
    </location>
    <ligand>
        <name>Mn(2+)</name>
        <dbReference type="ChEBI" id="CHEBI:29035"/>
        <label>2</label>
    </ligand>
</feature>
<feature type="binding site" evidence="1">
    <location>
        <position position="445"/>
    </location>
    <ligand>
        <name>Mn(2+)</name>
        <dbReference type="ChEBI" id="CHEBI:29035"/>
        <label>2</label>
    </ligand>
</feature>
<feature type="binding site" evidence="1">
    <location>
        <position position="463"/>
    </location>
    <ligand>
        <name>Mn(2+)</name>
        <dbReference type="ChEBI" id="CHEBI:29035"/>
        <label>1</label>
    </ligand>
</feature>
<comment type="function">
    <text evidence="1">Catalyzes the interconversion of 2-phosphoglycerate and 3-phosphoglycerate.</text>
</comment>
<comment type="catalytic activity">
    <reaction evidence="1">
        <text>(2R)-2-phosphoglycerate = (2R)-3-phosphoglycerate</text>
        <dbReference type="Rhea" id="RHEA:15901"/>
        <dbReference type="ChEBI" id="CHEBI:58272"/>
        <dbReference type="ChEBI" id="CHEBI:58289"/>
        <dbReference type="EC" id="5.4.2.12"/>
    </reaction>
</comment>
<comment type="cofactor">
    <cofactor evidence="1">
        <name>Mn(2+)</name>
        <dbReference type="ChEBI" id="CHEBI:29035"/>
    </cofactor>
    <text evidence="1">Binds 2 manganese ions per subunit.</text>
</comment>
<comment type="pathway">
    <text evidence="1">Carbohydrate degradation; glycolysis; pyruvate from D-glyceraldehyde 3-phosphate: step 3/5.</text>
</comment>
<comment type="subunit">
    <text evidence="1">Monomer.</text>
</comment>
<comment type="similarity">
    <text evidence="1">Belongs to the BPG-independent phosphoglycerate mutase family.</text>
</comment>
<proteinExistence type="inferred from homology"/>
<organism>
    <name type="scientific">Escherichia coli (strain ATCC 8739 / DSM 1576 / NBRC 3972 / NCIMB 8545 / WDCM 00012 / Crooks)</name>
    <dbReference type="NCBI Taxonomy" id="481805"/>
    <lineage>
        <taxon>Bacteria</taxon>
        <taxon>Pseudomonadati</taxon>
        <taxon>Pseudomonadota</taxon>
        <taxon>Gammaproteobacteria</taxon>
        <taxon>Enterobacterales</taxon>
        <taxon>Enterobacteriaceae</taxon>
        <taxon>Escherichia</taxon>
    </lineage>
</organism>
<accession>B1IZH8</accession>